<reference key="1">
    <citation type="journal article" date="2000" name="Nature">
        <title>DNA sequence of both chromosomes of the cholera pathogen Vibrio cholerae.</title>
        <authorList>
            <person name="Heidelberg J.F."/>
            <person name="Eisen J.A."/>
            <person name="Nelson W.C."/>
            <person name="Clayton R.A."/>
            <person name="Gwinn M.L."/>
            <person name="Dodson R.J."/>
            <person name="Haft D.H."/>
            <person name="Hickey E.K."/>
            <person name="Peterson J.D."/>
            <person name="Umayam L.A."/>
            <person name="Gill S.R."/>
            <person name="Nelson K.E."/>
            <person name="Read T.D."/>
            <person name="Tettelin H."/>
            <person name="Richardson D.L."/>
            <person name="Ermolaeva M.D."/>
            <person name="Vamathevan J.J."/>
            <person name="Bass S."/>
            <person name="Qin H."/>
            <person name="Dragoi I."/>
            <person name="Sellers P."/>
            <person name="McDonald L.A."/>
            <person name="Utterback T.R."/>
            <person name="Fleischmann R.D."/>
            <person name="Nierman W.C."/>
            <person name="White O."/>
            <person name="Salzberg S.L."/>
            <person name="Smith H.O."/>
            <person name="Colwell R.R."/>
            <person name="Mekalanos J.J."/>
            <person name="Venter J.C."/>
            <person name="Fraser C.M."/>
        </authorList>
    </citation>
    <scope>NUCLEOTIDE SEQUENCE [LARGE SCALE GENOMIC DNA]</scope>
    <source>
        <strain>ATCC 39315 / El Tor Inaba N16961</strain>
    </source>
</reference>
<comment type="function">
    <text evidence="1">Catalyzes the formation of sulfite from phosphoadenosine 5'-phosphosulfate (PAPS) using thioredoxin as an electron donor.</text>
</comment>
<comment type="catalytic activity">
    <reaction evidence="1">
        <text>[thioredoxin]-disulfide + sulfite + adenosine 3',5'-bisphosphate + 2 H(+) = [thioredoxin]-dithiol + 3'-phosphoadenylyl sulfate</text>
        <dbReference type="Rhea" id="RHEA:11724"/>
        <dbReference type="Rhea" id="RHEA-COMP:10698"/>
        <dbReference type="Rhea" id="RHEA-COMP:10700"/>
        <dbReference type="ChEBI" id="CHEBI:15378"/>
        <dbReference type="ChEBI" id="CHEBI:17359"/>
        <dbReference type="ChEBI" id="CHEBI:29950"/>
        <dbReference type="ChEBI" id="CHEBI:50058"/>
        <dbReference type="ChEBI" id="CHEBI:58339"/>
        <dbReference type="ChEBI" id="CHEBI:58343"/>
        <dbReference type="EC" id="1.8.4.8"/>
    </reaction>
</comment>
<comment type="pathway">
    <text evidence="1">Sulfur metabolism; hydrogen sulfide biosynthesis; sulfite from sulfate: step 3/3.</text>
</comment>
<comment type="subcellular location">
    <subcellularLocation>
        <location evidence="1">Cytoplasm</location>
    </subcellularLocation>
</comment>
<comment type="similarity">
    <text evidence="1">Belongs to the PAPS reductase family. CysH subfamily.</text>
</comment>
<protein>
    <recommendedName>
        <fullName evidence="1">Phosphoadenosine 5'-phosphosulfate reductase</fullName>
        <shortName evidence="1">PAPS reductase</shortName>
        <ecNumber evidence="1">1.8.4.8</ecNumber>
    </recommendedName>
    <alternativeName>
        <fullName evidence="1">3'-phosphoadenylylsulfate reductase</fullName>
    </alternativeName>
    <alternativeName>
        <fullName evidence="1">PAPS reductase, thioredoxin dependent</fullName>
    </alternativeName>
    <alternativeName>
        <fullName evidence="1">PAPS sulfotransferase</fullName>
    </alternativeName>
    <alternativeName>
        <fullName evidence="1">PAdoPS reductase</fullName>
    </alternativeName>
</protein>
<dbReference type="EC" id="1.8.4.8" evidence="1"/>
<dbReference type="EMBL" id="AE003852">
    <property type="protein sequence ID" value="AAF93559.1"/>
    <property type="molecule type" value="Genomic_DNA"/>
</dbReference>
<dbReference type="PIR" id="D82329">
    <property type="entry name" value="D82329"/>
</dbReference>
<dbReference type="RefSeq" id="NP_230040.1">
    <property type="nucleotide sequence ID" value="NC_002505.1"/>
</dbReference>
<dbReference type="RefSeq" id="WP_001133791.1">
    <property type="nucleotide sequence ID" value="NZ_LT906614.1"/>
</dbReference>
<dbReference type="SMR" id="Q9KUX2"/>
<dbReference type="STRING" id="243277.VC_0386"/>
<dbReference type="DNASU" id="2615029"/>
<dbReference type="EnsemblBacteria" id="AAF93559">
    <property type="protein sequence ID" value="AAF93559"/>
    <property type="gene ID" value="VC_0386"/>
</dbReference>
<dbReference type="KEGG" id="vch:VC_0386"/>
<dbReference type="PATRIC" id="fig|243277.26.peg.362"/>
<dbReference type="eggNOG" id="COG0175">
    <property type="taxonomic scope" value="Bacteria"/>
</dbReference>
<dbReference type="HOGENOM" id="CLU_044089_3_0_6"/>
<dbReference type="UniPathway" id="UPA00140">
    <property type="reaction ID" value="UER00206"/>
</dbReference>
<dbReference type="Proteomes" id="UP000000584">
    <property type="component" value="Chromosome 1"/>
</dbReference>
<dbReference type="GO" id="GO:0005737">
    <property type="term" value="C:cytoplasm"/>
    <property type="evidence" value="ECO:0007669"/>
    <property type="project" value="UniProtKB-SubCell"/>
</dbReference>
<dbReference type="GO" id="GO:0004604">
    <property type="term" value="F:phosphoadenylyl-sulfate reductase (thioredoxin) activity"/>
    <property type="evidence" value="ECO:0000318"/>
    <property type="project" value="GO_Central"/>
</dbReference>
<dbReference type="GO" id="GO:0070814">
    <property type="term" value="P:hydrogen sulfide biosynthetic process"/>
    <property type="evidence" value="ECO:0007669"/>
    <property type="project" value="UniProtKB-UniRule"/>
</dbReference>
<dbReference type="GO" id="GO:0019379">
    <property type="term" value="P:sulfate assimilation, phosphoadenylyl sulfate reduction by phosphoadenylyl-sulfate reductase (thioredoxin)"/>
    <property type="evidence" value="ECO:0000318"/>
    <property type="project" value="GO_Central"/>
</dbReference>
<dbReference type="CDD" id="cd23945">
    <property type="entry name" value="PAPS_reductase"/>
    <property type="match status" value="1"/>
</dbReference>
<dbReference type="FunFam" id="3.40.50.620:FF:000043">
    <property type="entry name" value="Phosphoadenosine phosphosulfate reductase"/>
    <property type="match status" value="1"/>
</dbReference>
<dbReference type="Gene3D" id="3.40.50.620">
    <property type="entry name" value="HUPs"/>
    <property type="match status" value="1"/>
</dbReference>
<dbReference type="HAMAP" id="MF_00063">
    <property type="entry name" value="CysH"/>
    <property type="match status" value="1"/>
</dbReference>
<dbReference type="InterPro" id="IPR004511">
    <property type="entry name" value="PAPS/APS_Rdtase"/>
</dbReference>
<dbReference type="InterPro" id="IPR002500">
    <property type="entry name" value="PAPS_reduct_dom"/>
</dbReference>
<dbReference type="InterPro" id="IPR011800">
    <property type="entry name" value="PAPS_reductase_CysH"/>
</dbReference>
<dbReference type="InterPro" id="IPR014729">
    <property type="entry name" value="Rossmann-like_a/b/a_fold"/>
</dbReference>
<dbReference type="NCBIfam" id="TIGR00434">
    <property type="entry name" value="cysH"/>
    <property type="match status" value="1"/>
</dbReference>
<dbReference type="NCBIfam" id="TIGR02057">
    <property type="entry name" value="PAPS_reductase"/>
    <property type="match status" value="1"/>
</dbReference>
<dbReference type="NCBIfam" id="NF002537">
    <property type="entry name" value="PRK02090.1"/>
    <property type="match status" value="1"/>
</dbReference>
<dbReference type="PANTHER" id="PTHR46509">
    <property type="entry name" value="PHOSPHOADENOSINE PHOSPHOSULFATE REDUCTASE"/>
    <property type="match status" value="1"/>
</dbReference>
<dbReference type="PANTHER" id="PTHR46509:SF1">
    <property type="entry name" value="PHOSPHOADENOSINE PHOSPHOSULFATE REDUCTASE"/>
    <property type="match status" value="1"/>
</dbReference>
<dbReference type="Pfam" id="PF01507">
    <property type="entry name" value="PAPS_reduct"/>
    <property type="match status" value="1"/>
</dbReference>
<dbReference type="PIRSF" id="PIRSF000857">
    <property type="entry name" value="PAPS_reductase"/>
    <property type="match status" value="1"/>
</dbReference>
<dbReference type="SUPFAM" id="SSF52402">
    <property type="entry name" value="Adenine nucleotide alpha hydrolases-like"/>
    <property type="match status" value="1"/>
</dbReference>
<sequence length="253" mass="29249">MPNRTVPTLEELLTLNKVQQTLRLTEVNQHLESLTAQERVVWGLENLQGNHALSSSFGIQAAVMLHLLTSVKSDIPVVLTDTGYLFPETYQFIDELTERLNLNLKVYSAPVSAAWQEARYGKLWEQGVEGIERYNQINKVEPMRRALDELNIGTWFSGLRREQSQSRASLPILSVQNGVFKFLPVIDWTNKEVHYYLKDNDLPYHPLWEQGYLSVGDTHTTQKWQPGMNEEQTRFFGLKRECGLHEDHNDTHQ</sequence>
<accession>Q9KUX2</accession>
<keyword id="KW-0963">Cytoplasm</keyword>
<keyword id="KW-0560">Oxidoreductase</keyword>
<keyword id="KW-1185">Reference proteome</keyword>
<feature type="chain" id="PRO_0000100652" description="Phosphoadenosine 5'-phosphosulfate reductase">
    <location>
        <begin position="1"/>
        <end position="253"/>
    </location>
</feature>
<feature type="active site" description="Nucleophile; cysteine thiosulfonate intermediate" evidence="1">
    <location>
        <position position="242"/>
    </location>
</feature>
<evidence type="ECO:0000255" key="1">
    <source>
        <dbReference type="HAMAP-Rule" id="MF_00063"/>
    </source>
</evidence>
<organism>
    <name type="scientific">Vibrio cholerae serotype O1 (strain ATCC 39315 / El Tor Inaba N16961)</name>
    <dbReference type="NCBI Taxonomy" id="243277"/>
    <lineage>
        <taxon>Bacteria</taxon>
        <taxon>Pseudomonadati</taxon>
        <taxon>Pseudomonadota</taxon>
        <taxon>Gammaproteobacteria</taxon>
        <taxon>Vibrionales</taxon>
        <taxon>Vibrionaceae</taxon>
        <taxon>Vibrio</taxon>
    </lineage>
</organism>
<gene>
    <name evidence="1" type="primary">cysH</name>
    <name type="ordered locus">VC_0386</name>
</gene>
<name>CYSH_VIBCH</name>
<proteinExistence type="inferred from homology"/>